<name>TX1A_HETMC</name>
<accession>P60992</accession>
<comment type="function">
    <text evidence="1 2 3">Gating-modifier toxin that potently inhibits inactivation of the mammalian Nav1.1/SCN1A sodium channel (EC(50)=38 nM) (PubMed:27281198, PubMed:30076230). Also moderately inhibits inactivation of Nav1.2/SCN2A (EC(50)=236 nM) and Nav1.3/SCN3A (EC(50)=220 nM) when the channels are expressed in oocytes without the beta-1 auxiliary subunit (PubMed:27281198). Does not inhibit inactivation of Nav1.2/SCN2A when the channel is coexpressed with the beta-1 auxiliary subunit (PubMed:30076230). When tested on Nav1.1/SCN1A channel, it enhances peak current amplitude and potently delays channel inactivation in a dose-dependent manner, leading to a large sustained current (PubMed:30076230). It has no effect on the voltage-dependence of steady-state activation, and induces a depolarizing shift in the voltage dependence of inactivation (PubMed:30076230). In addition, it does not modify the recovery from fast inactivation in Nav1.1/SCN1A (PubMed:30076230). The binding affinity and subtype selectivity of the toxin towards Nav1.1/SCN1A channel is determined by residues within both the S1-S2 and S3-S4 loops of the domain IV voltage sensor of the channel (PubMed:27281198). This toxin also weakly inhibits several subtypes of voltage-gated potassium channels (PubMed:27281198). It moderately blocks Kv2.1/KCNB1 (23% inhibition at 100 nM), Kv2.2/KCNB2 (19.7% at 100 nM and 51% at 300 nM), Kv4.1/KCND1 (IC(50)=280 nM), Kv4.2/KCND2 (39% at 300 nM) and Kv4.3/KCND3 (43% at 300 nM) (PubMed:12065754). In vivo, intracerebroventricular injection into mice elicits convulsions, spasms, tremors and rapid death (PubMed:12065754). When injected into mouse hindpaw, the toxin elicits an immediate and robust response to pain (PubMed:27281198). However, intraplantar injection of toxin does not cause neurogenic inflammation or alter sensitivity to heat, indicative of a modality-specific effect on mechanosensitive neurons (PubMed:27281198). In Dravet syndrome mice model, intracerebroventricular infusion of this peptide rescues mice from seizures and premature death (PubMed:30076230).</text>
</comment>
<comment type="subcellular location">
    <subcellularLocation>
        <location evidence="1 2">Secreted</location>
    </subcellularLocation>
</comment>
<comment type="tissue specificity">
    <text evidence="8 9">Expressed by the venom gland.</text>
</comment>
<comment type="domain">
    <text evidence="3">The presence of a 'disulfide through disulfide knot' structurally defines this protein as a knottin.</text>
</comment>
<comment type="mass spectrometry"/>
<comment type="mass spectrometry"/>
<comment type="mass spectrometry">
    <text>Monoisotopic mass.</text>
</comment>
<comment type="pharmaceutical">
    <text evidence="10">May be used to develop new agents to treat Nav1.1/SCN1A-associated epilepsies, such as the Dravet syndrome. In Dravet syndrome mice model, by a selective activation of Nav1.1/SCN1A channels, this peptide restores the function of inhibitory interneurons without affecting the firing of excitatory neurons.</text>
</comment>
<comment type="miscellaneous">
    <text evidence="3 4">Shows poor stability in cerebrospinal fluid and moderate stability in human serum (PubMed:30076230, PubMed:32335140). Half-life of the toxin is about 1.7 hour in cerebrospinal fluid (PubMed:30076230). Half-life of the native toxin is about 10 hours in human serum (PubMed:32335140).</text>
</comment>
<comment type="miscellaneous">
    <text evidence="1 2 3">Negative results: does not inhibit Nav1.4/SCN4A, Nav1.5/SCN5A, Nav1.6/SCN8A, Nav1.7/SCN9A, and Nav1.8/SCN10A at concentrations up to 50 nM or 1 uM (PubMed:27281198, PubMed:30076230). Does not inhibit Nav1.2/SCN2A at concentrations up to 50 nM (PubMed:30076230). Has no or very weak effect on Kv1.1/KCNA1, Kv1.2/KCNA2, Kv1.3/KCNA3, Kv1.4/KCNA4, Kv1.5/KCNA5, Kv1.6/KCNA6 and Kv3.4/KCNC4 (PubMed:12065754). Does not show significant effects on Kv1.7/KCNQ1, Kv10.1/KCNH1/EAG1, Kv11.1/KCNH2/ERG1, KCa1.1/KCNMA1, KCa2.1/KCNN1 and KCa2.3/KCNN3 (PubMed:12065754).</text>
</comment>
<comment type="similarity">
    <text evidence="7">Belongs to the neurotoxin 10 (Hwtx-1) family. 09 (HaTx) subfamily.</text>
</comment>
<protein>
    <recommendedName>
        <fullName evidence="6">Delta-theraphotoxin-Hm1a</fullName>
        <shortName evidence="8">Delta-TRTX-Hm1a</shortName>
    </recommendedName>
    <alternativeName>
        <fullName evidence="5">Heteroscodratoxin-1</fullName>
        <shortName evidence="5">HmTx1</shortName>
    </alternativeName>
    <alternativeName>
        <fullName evidence="6">Kappa-theraphotoxin-Hm1a</fullName>
        <shortName evidence="9">Kappa-TRTX-Hm1a</shortName>
    </alternativeName>
</protein>
<organism>
    <name type="scientific">Heteroscodra maculata</name>
    <name type="common">Togo starburst tarantula</name>
    <name type="synonym">Togo starburst baboon spider</name>
    <dbReference type="NCBI Taxonomy" id="268413"/>
    <lineage>
        <taxon>Eukaryota</taxon>
        <taxon>Metazoa</taxon>
        <taxon>Ecdysozoa</taxon>
        <taxon>Arthropoda</taxon>
        <taxon>Chelicerata</taxon>
        <taxon>Arachnida</taxon>
        <taxon>Araneae</taxon>
        <taxon>Mygalomorphae</taxon>
        <taxon>Theraphosidae</taxon>
        <taxon>Heteroscodra</taxon>
    </lineage>
</organism>
<sequence>ECRYLFGGCSSTSDCCKHLSCRSDWKYCAWDGTFS</sequence>
<reference key="1">
    <citation type="journal article" date="2002" name="Mol. Pharmacol.">
        <title>Novel tarantula toxins for subtypes of voltage-dependent potassium channels in the Kv2 and Kv4 subfamilies.</title>
        <authorList>
            <person name="Escoubas P."/>
            <person name="Diochot S."/>
            <person name="Celerier M.-L."/>
            <person name="Nakajima T."/>
            <person name="Lazdunski M."/>
        </authorList>
    </citation>
    <scope>PROTEIN SEQUENCE</scope>
    <scope>FUNCTION</scope>
    <scope>SUBCELLULAR LOCATION</scope>
    <scope>MASS SPECTROMETRY</scope>
    <scope>BIOASSAY</scope>
    <scope>3D-STRUCTURE MODELING</scope>
    <source>
        <tissue>Venom</tissue>
    </source>
</reference>
<reference key="2">
    <citation type="journal article" date="2016" name="Nature">
        <title>Selective spider toxins reveal a role for the Nav1.1 channel in mechanical pain.</title>
        <authorList>
            <person name="Osteen J.D."/>
            <person name="Herzig V."/>
            <person name="Gilchrist J."/>
            <person name="Emrick J.J."/>
            <person name="Zhang C."/>
            <person name="Wang X."/>
            <person name="Castro J."/>
            <person name="Garcia-Caraballo S."/>
            <person name="Grundy L."/>
            <person name="Rychkov G.Y."/>
            <person name="Weyer A.D."/>
            <person name="Dekan Z."/>
            <person name="Undheim E.A."/>
            <person name="Alewood P."/>
            <person name="Stucky C.L."/>
            <person name="Brierley S.M."/>
            <person name="Basbaum A.I."/>
            <person name="Bosmans F."/>
            <person name="King G.F."/>
            <person name="Julius D."/>
        </authorList>
    </citation>
    <scope>PROTEIN SEQUENCE</scope>
    <scope>FUNCTION</scope>
    <scope>SUBCELLULAR LOCATION</scope>
    <scope>MASS SPECTROMETRY</scope>
    <scope>BIOASSAY</scope>
    <source>
        <tissue>Venom</tissue>
    </source>
</reference>
<reference key="3">
    <citation type="journal article" date="2020" name="Biochem. Pharmacol.">
        <title>A selective Nav1.1 activator with potential for treatment of Dravet syndrome epilepsy.</title>
        <authorList>
            <person name="Chow C.Y."/>
            <person name="Chin Y.K.Y."/>
            <person name="Ma L."/>
            <person name="Undheim E.A.B."/>
            <person name="Herzig V."/>
            <person name="King G.F."/>
        </authorList>
    </citation>
    <scope>MASS SPECTROMETRY</scope>
    <scope>STABILITY IN CEREBROSPINAL FLUID AND SERUM</scope>
    <source>
        <tissue>Venom</tissue>
    </source>
</reference>
<reference key="4">
    <citation type="journal article" date="2018" name="Proc. Natl. Acad. Sci. U.S.A.">
        <title>Selective Nav1.1 activation rescues Dravet syndrome mice from seizures and premature death.</title>
        <authorList>
            <person name="Richards K.L."/>
            <person name="Milligan C.J."/>
            <person name="Richardson R.J."/>
            <person name="Jancovski N."/>
            <person name="Grunnet M."/>
            <person name="Jacobson L.H."/>
            <person name="Undheim E.A.B."/>
            <person name="Mobli M."/>
            <person name="Chow C.Y."/>
            <person name="Herzig V."/>
            <person name="Csoti A."/>
            <person name="Panyi G."/>
            <person name="Reid C.A."/>
            <person name="King G.F."/>
            <person name="Petrou S."/>
        </authorList>
    </citation>
    <scope>STRUCTURE BY NMR</scope>
    <scope>FUNCTION</scope>
    <scope>DISULFIDE BOND</scope>
    <scope>PHARMACEUTICAL</scope>
    <scope>BIOASSAY ON DRAVET SYNDROME MICE MODEL</scope>
    <scope>STABILITY IN CEREBROSPINAL FLUID</scope>
    <scope>RECOMBINANT EXPRESSION</scope>
</reference>
<evidence type="ECO:0000269" key="1">
    <source>
    </source>
</evidence>
<evidence type="ECO:0000269" key="2">
    <source>
    </source>
</evidence>
<evidence type="ECO:0000269" key="3">
    <source>
    </source>
</evidence>
<evidence type="ECO:0000269" key="4">
    <source>
    </source>
</evidence>
<evidence type="ECO:0000303" key="5">
    <source>
    </source>
</evidence>
<evidence type="ECO:0000303" key="6">
    <source>
    </source>
</evidence>
<evidence type="ECO:0000305" key="7"/>
<evidence type="ECO:0000305" key="8">
    <source>
    </source>
</evidence>
<evidence type="ECO:0000305" key="9">
    <source>
    </source>
</evidence>
<evidence type="ECO:0000305" key="10">
    <source>
    </source>
</evidence>
<evidence type="ECO:0007744" key="11">
    <source>
        <dbReference type="PDB" id="2N6O"/>
    </source>
</evidence>
<evidence type="ECO:0007829" key="12">
    <source>
        <dbReference type="PDB" id="2N6O"/>
    </source>
</evidence>
<keyword id="KW-0002">3D-structure</keyword>
<keyword id="KW-0903">Direct protein sequencing</keyword>
<keyword id="KW-1015">Disulfide bond</keyword>
<keyword id="KW-0872">Ion channel impairing toxin</keyword>
<keyword id="KW-0960">Knottin</keyword>
<keyword id="KW-0528">Neurotoxin</keyword>
<keyword id="KW-0582">Pharmaceutical</keyword>
<keyword id="KW-0632">Potassium channel impairing toxin</keyword>
<keyword id="KW-0964">Secreted</keyword>
<keyword id="KW-0800">Toxin</keyword>
<keyword id="KW-1220">Voltage-gated potassium channel impairing toxin</keyword>
<keyword id="KW-0738">Voltage-gated sodium channel impairing toxin</keyword>
<dbReference type="PDB" id="2N6O">
    <property type="method" value="NMR"/>
    <property type="chains" value="A=1-35"/>
</dbReference>
<dbReference type="PDBsum" id="2N6O"/>
<dbReference type="BMRB" id="P60992"/>
<dbReference type="SMR" id="P60992"/>
<dbReference type="TCDB" id="8.B.5.3.3">
    <property type="family name" value="the na(+)/k(+)/ca(2+) channel targeting tarantula huwentoxin (tht) family"/>
</dbReference>
<dbReference type="ArachnoServer" id="AS000224">
    <property type="toxin name" value="delta-theraphotoxin-Hm1a"/>
</dbReference>
<dbReference type="GO" id="GO:0005576">
    <property type="term" value="C:extracellular region"/>
    <property type="evidence" value="ECO:0007669"/>
    <property type="project" value="UniProtKB-SubCell"/>
</dbReference>
<dbReference type="GO" id="GO:0008200">
    <property type="term" value="F:ion channel inhibitor activity"/>
    <property type="evidence" value="ECO:0007669"/>
    <property type="project" value="InterPro"/>
</dbReference>
<dbReference type="GO" id="GO:0015459">
    <property type="term" value="F:potassium channel regulator activity"/>
    <property type="evidence" value="ECO:0007669"/>
    <property type="project" value="UniProtKB-KW"/>
</dbReference>
<dbReference type="GO" id="GO:0017080">
    <property type="term" value="F:sodium channel regulator activity"/>
    <property type="evidence" value="ECO:0000314"/>
    <property type="project" value="UniProtKB"/>
</dbReference>
<dbReference type="GO" id="GO:0090729">
    <property type="term" value="F:toxin activity"/>
    <property type="evidence" value="ECO:0000314"/>
    <property type="project" value="UniProtKB"/>
</dbReference>
<dbReference type="GO" id="GO:0044494">
    <property type="term" value="P:envenomation resulting in positive regulation of voltage-gated sodium channel activity in another organism"/>
    <property type="evidence" value="ECO:0000314"/>
    <property type="project" value="UniProtKB"/>
</dbReference>
<dbReference type="InterPro" id="IPR011696">
    <property type="entry name" value="Huwentoxin-1"/>
</dbReference>
<dbReference type="Pfam" id="PF07740">
    <property type="entry name" value="Toxin_12"/>
    <property type="match status" value="1"/>
</dbReference>
<dbReference type="SUPFAM" id="SSF57059">
    <property type="entry name" value="omega toxin-like"/>
    <property type="match status" value="1"/>
</dbReference>
<feature type="peptide" id="PRO_0000045017" description="Delta-theraphotoxin-Hm1a" evidence="1 2">
    <location>
        <begin position="1"/>
        <end position="35"/>
    </location>
</feature>
<feature type="disulfide bond" evidence="3 11">
    <location>
        <begin position="2"/>
        <end position="16"/>
    </location>
</feature>
<feature type="disulfide bond" evidence="3 11">
    <location>
        <begin position="9"/>
        <end position="21"/>
    </location>
</feature>
<feature type="disulfide bond" evidence="3 11">
    <location>
        <begin position="15"/>
        <end position="28"/>
    </location>
</feature>
<feature type="turn" evidence="12">
    <location>
        <begin position="5"/>
        <end position="7"/>
    </location>
</feature>
<feature type="helix" evidence="12">
    <location>
        <begin position="12"/>
        <end position="14"/>
    </location>
</feature>
<feature type="turn" evidence="12">
    <location>
        <begin position="23"/>
        <end position="26"/>
    </location>
</feature>
<proteinExistence type="evidence at protein level"/>